<dbReference type="EC" id="3.1.-.-" evidence="1"/>
<dbReference type="EMBL" id="CP000612">
    <property type="protein sequence ID" value="ABO49313.1"/>
    <property type="molecule type" value="Genomic_DNA"/>
</dbReference>
<dbReference type="RefSeq" id="WP_011877148.1">
    <property type="nucleotide sequence ID" value="NC_009253.1"/>
</dbReference>
<dbReference type="SMR" id="A4J2L0"/>
<dbReference type="STRING" id="349161.Dred_0775"/>
<dbReference type="KEGG" id="drm:Dred_0775"/>
<dbReference type="eggNOG" id="COG0816">
    <property type="taxonomic scope" value="Bacteria"/>
</dbReference>
<dbReference type="HOGENOM" id="CLU_098240_2_0_9"/>
<dbReference type="OrthoDB" id="9796140at2"/>
<dbReference type="Proteomes" id="UP000001556">
    <property type="component" value="Chromosome"/>
</dbReference>
<dbReference type="GO" id="GO:0005829">
    <property type="term" value="C:cytosol"/>
    <property type="evidence" value="ECO:0007669"/>
    <property type="project" value="TreeGrafter"/>
</dbReference>
<dbReference type="GO" id="GO:0004518">
    <property type="term" value="F:nuclease activity"/>
    <property type="evidence" value="ECO:0007669"/>
    <property type="project" value="UniProtKB-KW"/>
</dbReference>
<dbReference type="GO" id="GO:0000967">
    <property type="term" value="P:rRNA 5'-end processing"/>
    <property type="evidence" value="ECO:0007669"/>
    <property type="project" value="UniProtKB-UniRule"/>
</dbReference>
<dbReference type="CDD" id="cd16964">
    <property type="entry name" value="YqgF"/>
    <property type="match status" value="1"/>
</dbReference>
<dbReference type="Gene3D" id="3.30.420.140">
    <property type="entry name" value="YqgF/RNase H-like domain"/>
    <property type="match status" value="1"/>
</dbReference>
<dbReference type="HAMAP" id="MF_00651">
    <property type="entry name" value="Nuclease_YqgF"/>
    <property type="match status" value="1"/>
</dbReference>
<dbReference type="InterPro" id="IPR012337">
    <property type="entry name" value="RNaseH-like_sf"/>
</dbReference>
<dbReference type="InterPro" id="IPR005227">
    <property type="entry name" value="YqgF"/>
</dbReference>
<dbReference type="InterPro" id="IPR006641">
    <property type="entry name" value="YqgF/RNaseH-like_dom"/>
</dbReference>
<dbReference type="InterPro" id="IPR037027">
    <property type="entry name" value="YqgF/RNaseH-like_dom_sf"/>
</dbReference>
<dbReference type="NCBIfam" id="TIGR00250">
    <property type="entry name" value="RNAse_H_YqgF"/>
    <property type="match status" value="1"/>
</dbReference>
<dbReference type="PANTHER" id="PTHR33317">
    <property type="entry name" value="POLYNUCLEOTIDYL TRANSFERASE, RIBONUCLEASE H-LIKE SUPERFAMILY PROTEIN"/>
    <property type="match status" value="1"/>
</dbReference>
<dbReference type="PANTHER" id="PTHR33317:SF4">
    <property type="entry name" value="POLYNUCLEOTIDYL TRANSFERASE, RIBONUCLEASE H-LIKE SUPERFAMILY PROTEIN"/>
    <property type="match status" value="1"/>
</dbReference>
<dbReference type="Pfam" id="PF03652">
    <property type="entry name" value="RuvX"/>
    <property type="match status" value="1"/>
</dbReference>
<dbReference type="SMART" id="SM00732">
    <property type="entry name" value="YqgFc"/>
    <property type="match status" value="1"/>
</dbReference>
<dbReference type="SUPFAM" id="SSF53098">
    <property type="entry name" value="Ribonuclease H-like"/>
    <property type="match status" value="1"/>
</dbReference>
<comment type="function">
    <text evidence="1">Could be a nuclease involved in processing of the 5'-end of pre-16S rRNA.</text>
</comment>
<comment type="subcellular location">
    <subcellularLocation>
        <location evidence="1">Cytoplasm</location>
    </subcellularLocation>
</comment>
<comment type="similarity">
    <text evidence="1">Belongs to the YqgF nuclease family.</text>
</comment>
<feature type="chain" id="PRO_1000072689" description="Putative pre-16S rRNA nuclease">
    <location>
        <begin position="1"/>
        <end position="137"/>
    </location>
</feature>
<protein>
    <recommendedName>
        <fullName evidence="1">Putative pre-16S rRNA nuclease</fullName>
        <ecNumber evidence="1">3.1.-.-</ecNumber>
    </recommendedName>
</protein>
<organism>
    <name type="scientific">Desulforamulus reducens (strain ATCC BAA-1160 / DSM 100696 / MI-1)</name>
    <name type="common">Desulfotomaculum reducens</name>
    <dbReference type="NCBI Taxonomy" id="349161"/>
    <lineage>
        <taxon>Bacteria</taxon>
        <taxon>Bacillati</taxon>
        <taxon>Bacillota</taxon>
        <taxon>Clostridia</taxon>
        <taxon>Eubacteriales</taxon>
        <taxon>Peptococcaceae</taxon>
        <taxon>Desulforamulus</taxon>
    </lineage>
</organism>
<evidence type="ECO:0000255" key="1">
    <source>
        <dbReference type="HAMAP-Rule" id="MF_00651"/>
    </source>
</evidence>
<gene>
    <name type="ordered locus">Dred_0775</name>
</gene>
<name>YQGF_DESRM</name>
<sequence>MRIMGLDVGDKTIGVALSDPLGWTAQGLEVIRRDTIEKDMNRLAQIISEYSVERILVGMPKNMNGTVGSQGEKVLAFIEKVKEKIDLPIKTWDERLSTVAAEKMLIQADVSRGKRKKVIDKMAAAVILQGYLDSGAK</sequence>
<keyword id="KW-0963">Cytoplasm</keyword>
<keyword id="KW-0378">Hydrolase</keyword>
<keyword id="KW-0540">Nuclease</keyword>
<keyword id="KW-1185">Reference proteome</keyword>
<keyword id="KW-0690">Ribosome biogenesis</keyword>
<proteinExistence type="inferred from homology"/>
<accession>A4J2L0</accession>
<reference key="1">
    <citation type="submission" date="2007-03" db="EMBL/GenBank/DDBJ databases">
        <title>Complete sequence of Desulfotomaculum reducens MI-1.</title>
        <authorList>
            <consortium name="US DOE Joint Genome Institute"/>
            <person name="Copeland A."/>
            <person name="Lucas S."/>
            <person name="Lapidus A."/>
            <person name="Barry K."/>
            <person name="Detter J.C."/>
            <person name="Glavina del Rio T."/>
            <person name="Hammon N."/>
            <person name="Israni S."/>
            <person name="Dalin E."/>
            <person name="Tice H."/>
            <person name="Pitluck S."/>
            <person name="Sims D."/>
            <person name="Brettin T."/>
            <person name="Bruce D."/>
            <person name="Han C."/>
            <person name="Tapia R."/>
            <person name="Schmutz J."/>
            <person name="Larimer F."/>
            <person name="Land M."/>
            <person name="Hauser L."/>
            <person name="Kyrpides N."/>
            <person name="Kim E."/>
            <person name="Tebo B.M."/>
            <person name="Richardson P."/>
        </authorList>
    </citation>
    <scope>NUCLEOTIDE SEQUENCE [LARGE SCALE GENOMIC DNA]</scope>
    <source>
        <strain>ATCC BAA-1160 / DSM 100696 / MI-1</strain>
    </source>
</reference>